<evidence type="ECO:0000255" key="1">
    <source>
        <dbReference type="HAMAP-Rule" id="MF_00013"/>
    </source>
</evidence>
<evidence type="ECO:0000255" key="2">
    <source>
        <dbReference type="PROSITE-ProRule" id="PRU01067"/>
    </source>
</evidence>
<proteinExistence type="inferred from homology"/>
<reference key="1">
    <citation type="journal article" date="2005" name="PLoS Biol.">
        <title>The Wolbachia genome of Brugia malayi: endosymbiont evolution within a human pathogenic nematode.</title>
        <authorList>
            <person name="Foster J."/>
            <person name="Ganatra M."/>
            <person name="Kamal I."/>
            <person name="Ware J."/>
            <person name="Makarova K."/>
            <person name="Ivanova N."/>
            <person name="Bhattacharyya A."/>
            <person name="Kapatral V."/>
            <person name="Kumar S."/>
            <person name="Posfai J."/>
            <person name="Vincze T."/>
            <person name="Ingram J."/>
            <person name="Moran L."/>
            <person name="Lapidus A."/>
            <person name="Omelchenko M."/>
            <person name="Kyrpides N."/>
            <person name="Ghedin E."/>
            <person name="Wang S."/>
            <person name="Goltsman E."/>
            <person name="Joukov V."/>
            <person name="Ostrovskaya O."/>
            <person name="Tsukerman K."/>
            <person name="Mazur M."/>
            <person name="Comb D."/>
            <person name="Koonin E."/>
            <person name="Slatko B."/>
        </authorList>
    </citation>
    <scope>NUCLEOTIDE SEQUENCE [LARGE SCALE GENOMIC DNA]</scope>
    <source>
        <strain>TRS</strain>
    </source>
</reference>
<sequence>MVEWLISDQLINYNYAVKFMEKKIQQIHNNSSDELVWLLQHPPLYTAGISATDDDVVEKLLPIYKTGRGGKYTYHGPGQRIIYLMLNLKKRNKCDIKLYIRELGSWIINVLKHFNIFGEFKEDRIGVWVNNNGVEEKIAAFGIRLRKWITYHGIALNFSPDLSHYKGIIPCGLKGYGVTSIKELGVKAPLFKLDNILKKEFYKIF</sequence>
<gene>
    <name evidence="1" type="primary">lipB</name>
    <name type="ordered locus">Wbm0235</name>
</gene>
<comment type="function">
    <text evidence="1">Catalyzes the transfer of endogenously produced octanoic acid from octanoyl-acyl-carrier-protein onto the lipoyl domains of lipoate-dependent enzymes. Lipoyl-ACP can also act as a substrate although octanoyl-ACP is likely to be the physiological substrate.</text>
</comment>
<comment type="catalytic activity">
    <reaction evidence="1">
        <text>octanoyl-[ACP] + L-lysyl-[protein] = N(6)-octanoyl-L-lysyl-[protein] + holo-[ACP] + H(+)</text>
        <dbReference type="Rhea" id="RHEA:17665"/>
        <dbReference type="Rhea" id="RHEA-COMP:9636"/>
        <dbReference type="Rhea" id="RHEA-COMP:9685"/>
        <dbReference type="Rhea" id="RHEA-COMP:9752"/>
        <dbReference type="Rhea" id="RHEA-COMP:9928"/>
        <dbReference type="ChEBI" id="CHEBI:15378"/>
        <dbReference type="ChEBI" id="CHEBI:29969"/>
        <dbReference type="ChEBI" id="CHEBI:64479"/>
        <dbReference type="ChEBI" id="CHEBI:78463"/>
        <dbReference type="ChEBI" id="CHEBI:78809"/>
        <dbReference type="EC" id="2.3.1.181"/>
    </reaction>
</comment>
<comment type="pathway">
    <text evidence="1">Protein modification; protein lipoylation via endogenous pathway; protein N(6)-(lipoyl)lysine from octanoyl-[acyl-carrier-protein]: step 1/2.</text>
</comment>
<comment type="subcellular location">
    <subcellularLocation>
        <location evidence="1">Cytoplasm</location>
    </subcellularLocation>
</comment>
<comment type="miscellaneous">
    <text evidence="1">In the reaction, the free carboxyl group of octanoic acid is attached via an amide linkage to the epsilon-amino group of a specific lysine residue of lipoyl domains of lipoate-dependent enzymes.</text>
</comment>
<comment type="similarity">
    <text evidence="1">Belongs to the LipB family.</text>
</comment>
<dbReference type="EC" id="2.3.1.181" evidence="1"/>
<dbReference type="EMBL" id="AE017321">
    <property type="protein sequence ID" value="AAW70824.1"/>
    <property type="molecule type" value="Genomic_DNA"/>
</dbReference>
<dbReference type="RefSeq" id="WP_011256434.1">
    <property type="nucleotide sequence ID" value="NC_006833.1"/>
</dbReference>
<dbReference type="SMR" id="Q5GT50"/>
<dbReference type="STRING" id="292805.Wbm0235"/>
<dbReference type="KEGG" id="wbm:Wbm0235"/>
<dbReference type="eggNOG" id="COG0321">
    <property type="taxonomic scope" value="Bacteria"/>
</dbReference>
<dbReference type="HOGENOM" id="CLU_035168_3_0_5"/>
<dbReference type="UniPathway" id="UPA00538">
    <property type="reaction ID" value="UER00592"/>
</dbReference>
<dbReference type="Proteomes" id="UP000000534">
    <property type="component" value="Chromosome"/>
</dbReference>
<dbReference type="GO" id="GO:0005737">
    <property type="term" value="C:cytoplasm"/>
    <property type="evidence" value="ECO:0007669"/>
    <property type="project" value="UniProtKB-SubCell"/>
</dbReference>
<dbReference type="GO" id="GO:0033819">
    <property type="term" value="F:lipoyl(octanoyl) transferase activity"/>
    <property type="evidence" value="ECO:0007669"/>
    <property type="project" value="UniProtKB-EC"/>
</dbReference>
<dbReference type="GO" id="GO:0036211">
    <property type="term" value="P:protein modification process"/>
    <property type="evidence" value="ECO:0007669"/>
    <property type="project" value="InterPro"/>
</dbReference>
<dbReference type="CDD" id="cd16444">
    <property type="entry name" value="LipB"/>
    <property type="match status" value="1"/>
</dbReference>
<dbReference type="Gene3D" id="3.30.930.10">
    <property type="entry name" value="Bira Bifunctional Protein, Domain 2"/>
    <property type="match status" value="1"/>
</dbReference>
<dbReference type="HAMAP" id="MF_00013">
    <property type="entry name" value="LipB"/>
    <property type="match status" value="1"/>
</dbReference>
<dbReference type="InterPro" id="IPR045864">
    <property type="entry name" value="aa-tRNA-synth_II/BPL/LPL"/>
</dbReference>
<dbReference type="InterPro" id="IPR004143">
    <property type="entry name" value="BPL_LPL_catalytic"/>
</dbReference>
<dbReference type="InterPro" id="IPR000544">
    <property type="entry name" value="Octanoyltransferase"/>
</dbReference>
<dbReference type="InterPro" id="IPR020605">
    <property type="entry name" value="Octanoyltransferase_CS"/>
</dbReference>
<dbReference type="NCBIfam" id="TIGR00214">
    <property type="entry name" value="lipB"/>
    <property type="match status" value="1"/>
</dbReference>
<dbReference type="NCBIfam" id="NF010921">
    <property type="entry name" value="PRK14341.1"/>
    <property type="match status" value="1"/>
</dbReference>
<dbReference type="PANTHER" id="PTHR10993:SF7">
    <property type="entry name" value="LIPOYLTRANSFERASE 2, MITOCHONDRIAL-RELATED"/>
    <property type="match status" value="1"/>
</dbReference>
<dbReference type="PANTHER" id="PTHR10993">
    <property type="entry name" value="OCTANOYLTRANSFERASE"/>
    <property type="match status" value="1"/>
</dbReference>
<dbReference type="Pfam" id="PF21948">
    <property type="entry name" value="LplA-B_cat"/>
    <property type="match status" value="1"/>
</dbReference>
<dbReference type="PIRSF" id="PIRSF016262">
    <property type="entry name" value="LPLase"/>
    <property type="match status" value="1"/>
</dbReference>
<dbReference type="SUPFAM" id="SSF55681">
    <property type="entry name" value="Class II aaRS and biotin synthetases"/>
    <property type="match status" value="1"/>
</dbReference>
<dbReference type="PROSITE" id="PS51733">
    <property type="entry name" value="BPL_LPL_CATALYTIC"/>
    <property type="match status" value="1"/>
</dbReference>
<dbReference type="PROSITE" id="PS01313">
    <property type="entry name" value="LIPB"/>
    <property type="match status" value="1"/>
</dbReference>
<name>LIPB_WOLTR</name>
<feature type="chain" id="PRO_0000242780" description="Octanoyltransferase">
    <location>
        <begin position="1"/>
        <end position="205"/>
    </location>
</feature>
<feature type="domain" description="BPL/LPL catalytic" evidence="2">
    <location>
        <begin position="30"/>
        <end position="205"/>
    </location>
</feature>
<feature type="active site" description="Acyl-thioester intermediate" evidence="1">
    <location>
        <position position="171"/>
    </location>
</feature>
<feature type="binding site" evidence="1">
    <location>
        <begin position="68"/>
        <end position="75"/>
    </location>
    <ligand>
        <name>substrate</name>
    </ligand>
</feature>
<feature type="binding site" evidence="1">
    <location>
        <begin position="140"/>
        <end position="142"/>
    </location>
    <ligand>
        <name>substrate</name>
    </ligand>
</feature>
<feature type="binding site" evidence="1">
    <location>
        <begin position="153"/>
        <end position="155"/>
    </location>
    <ligand>
        <name>substrate</name>
    </ligand>
</feature>
<feature type="site" description="Lowers pKa of active site Cys" evidence="1">
    <location>
        <position position="137"/>
    </location>
</feature>
<organism>
    <name type="scientific">Wolbachia sp. subsp. Brugia malayi (strain TRS)</name>
    <dbReference type="NCBI Taxonomy" id="292805"/>
    <lineage>
        <taxon>Bacteria</taxon>
        <taxon>Pseudomonadati</taxon>
        <taxon>Pseudomonadota</taxon>
        <taxon>Alphaproteobacteria</taxon>
        <taxon>Rickettsiales</taxon>
        <taxon>Anaplasmataceae</taxon>
        <taxon>Wolbachieae</taxon>
        <taxon>Wolbachia</taxon>
    </lineage>
</organism>
<keyword id="KW-0012">Acyltransferase</keyword>
<keyword id="KW-0963">Cytoplasm</keyword>
<keyword id="KW-1185">Reference proteome</keyword>
<keyword id="KW-0808">Transferase</keyword>
<accession>Q5GT50</accession>
<protein>
    <recommendedName>
        <fullName evidence="1">Octanoyltransferase</fullName>
        <ecNumber evidence="1">2.3.1.181</ecNumber>
    </recommendedName>
    <alternativeName>
        <fullName evidence="1">Lipoate-protein ligase B</fullName>
    </alternativeName>
    <alternativeName>
        <fullName evidence="1">Lipoyl/octanoyl transferase</fullName>
    </alternativeName>
    <alternativeName>
        <fullName evidence="1">Octanoyl-[acyl-carrier-protein]-protein N-octanoyltransferase</fullName>
    </alternativeName>
</protein>